<gene>
    <name evidence="1" type="primary">purT</name>
    <name type="ordered locus">Daro_3552</name>
</gene>
<reference key="1">
    <citation type="journal article" date="2009" name="BMC Genomics">
        <title>Metabolic analysis of the soil microbe Dechloromonas aromatica str. RCB: indications of a surprisingly complex life-style and cryptic anaerobic pathways for aromatic degradation.</title>
        <authorList>
            <person name="Salinero K.K."/>
            <person name="Keller K."/>
            <person name="Feil W.S."/>
            <person name="Feil H."/>
            <person name="Trong S."/>
            <person name="Di Bartolo G."/>
            <person name="Lapidus A."/>
        </authorList>
    </citation>
    <scope>NUCLEOTIDE SEQUENCE [LARGE SCALE GENOMIC DNA]</scope>
    <source>
        <strain>RCB</strain>
    </source>
</reference>
<keyword id="KW-0067">ATP-binding</keyword>
<keyword id="KW-0436">Ligase</keyword>
<keyword id="KW-0460">Magnesium</keyword>
<keyword id="KW-0479">Metal-binding</keyword>
<keyword id="KW-0547">Nucleotide-binding</keyword>
<keyword id="KW-0658">Purine biosynthesis</keyword>
<name>PURT_DECAR</name>
<organism>
    <name type="scientific">Dechloromonas aromatica (strain RCB)</name>
    <dbReference type="NCBI Taxonomy" id="159087"/>
    <lineage>
        <taxon>Bacteria</taxon>
        <taxon>Pseudomonadati</taxon>
        <taxon>Pseudomonadota</taxon>
        <taxon>Betaproteobacteria</taxon>
        <taxon>Rhodocyclales</taxon>
        <taxon>Azonexaceae</taxon>
        <taxon>Dechloromonas</taxon>
    </lineage>
</organism>
<evidence type="ECO:0000255" key="1">
    <source>
        <dbReference type="HAMAP-Rule" id="MF_01643"/>
    </source>
</evidence>
<evidence type="ECO:0000256" key="2">
    <source>
        <dbReference type="SAM" id="MobiDB-lite"/>
    </source>
</evidence>
<dbReference type="EC" id="6.3.1.21" evidence="1"/>
<dbReference type="EMBL" id="CP000089">
    <property type="protein sequence ID" value="AAZ48281.1"/>
    <property type="molecule type" value="Genomic_DNA"/>
</dbReference>
<dbReference type="SMR" id="Q47A50"/>
<dbReference type="STRING" id="159087.Daro_3552"/>
<dbReference type="KEGG" id="dar:Daro_3552"/>
<dbReference type="eggNOG" id="COG0027">
    <property type="taxonomic scope" value="Bacteria"/>
</dbReference>
<dbReference type="HOGENOM" id="CLU_011534_1_3_4"/>
<dbReference type="OrthoDB" id="9804625at2"/>
<dbReference type="UniPathway" id="UPA00074">
    <property type="reaction ID" value="UER00127"/>
</dbReference>
<dbReference type="GO" id="GO:0005829">
    <property type="term" value="C:cytosol"/>
    <property type="evidence" value="ECO:0007669"/>
    <property type="project" value="TreeGrafter"/>
</dbReference>
<dbReference type="GO" id="GO:0005524">
    <property type="term" value="F:ATP binding"/>
    <property type="evidence" value="ECO:0007669"/>
    <property type="project" value="UniProtKB-UniRule"/>
</dbReference>
<dbReference type="GO" id="GO:0000287">
    <property type="term" value="F:magnesium ion binding"/>
    <property type="evidence" value="ECO:0007669"/>
    <property type="project" value="InterPro"/>
</dbReference>
<dbReference type="GO" id="GO:0043815">
    <property type="term" value="F:phosphoribosylglycinamide formyltransferase 2 activity"/>
    <property type="evidence" value="ECO:0007669"/>
    <property type="project" value="UniProtKB-UniRule"/>
</dbReference>
<dbReference type="GO" id="GO:0004644">
    <property type="term" value="F:phosphoribosylglycinamide formyltransferase activity"/>
    <property type="evidence" value="ECO:0007669"/>
    <property type="project" value="InterPro"/>
</dbReference>
<dbReference type="GO" id="GO:0006189">
    <property type="term" value="P:'de novo' IMP biosynthetic process"/>
    <property type="evidence" value="ECO:0007669"/>
    <property type="project" value="UniProtKB-UniRule"/>
</dbReference>
<dbReference type="FunFam" id="3.30.1490.20:FF:000013">
    <property type="entry name" value="Formate-dependent phosphoribosylglycinamide formyltransferase"/>
    <property type="match status" value="1"/>
</dbReference>
<dbReference type="FunFam" id="3.40.50.20:FF:000007">
    <property type="entry name" value="Formate-dependent phosphoribosylglycinamide formyltransferase"/>
    <property type="match status" value="1"/>
</dbReference>
<dbReference type="Gene3D" id="3.40.50.20">
    <property type="match status" value="1"/>
</dbReference>
<dbReference type="Gene3D" id="3.30.1490.20">
    <property type="entry name" value="ATP-grasp fold, A domain"/>
    <property type="match status" value="1"/>
</dbReference>
<dbReference type="Gene3D" id="3.30.470.20">
    <property type="entry name" value="ATP-grasp fold, B domain"/>
    <property type="match status" value="1"/>
</dbReference>
<dbReference type="HAMAP" id="MF_01643">
    <property type="entry name" value="PurT"/>
    <property type="match status" value="1"/>
</dbReference>
<dbReference type="InterPro" id="IPR011761">
    <property type="entry name" value="ATP-grasp"/>
</dbReference>
<dbReference type="InterPro" id="IPR003135">
    <property type="entry name" value="ATP-grasp_carboxylate-amine"/>
</dbReference>
<dbReference type="InterPro" id="IPR013815">
    <property type="entry name" value="ATP_grasp_subdomain_1"/>
</dbReference>
<dbReference type="InterPro" id="IPR005479">
    <property type="entry name" value="CbamoylP_synth_lsu-like_ATP-bd"/>
</dbReference>
<dbReference type="InterPro" id="IPR016185">
    <property type="entry name" value="PreATP-grasp_dom_sf"/>
</dbReference>
<dbReference type="InterPro" id="IPR005862">
    <property type="entry name" value="PurT"/>
</dbReference>
<dbReference type="InterPro" id="IPR054350">
    <property type="entry name" value="PurT/PurK_preATP-grasp"/>
</dbReference>
<dbReference type="InterPro" id="IPR048740">
    <property type="entry name" value="PurT_C"/>
</dbReference>
<dbReference type="InterPro" id="IPR011054">
    <property type="entry name" value="Rudment_hybrid_motif"/>
</dbReference>
<dbReference type="NCBIfam" id="NF006766">
    <property type="entry name" value="PRK09288.1"/>
    <property type="match status" value="1"/>
</dbReference>
<dbReference type="NCBIfam" id="TIGR01142">
    <property type="entry name" value="purT"/>
    <property type="match status" value="1"/>
</dbReference>
<dbReference type="PANTHER" id="PTHR43055">
    <property type="entry name" value="FORMATE-DEPENDENT PHOSPHORIBOSYLGLYCINAMIDE FORMYLTRANSFERASE"/>
    <property type="match status" value="1"/>
</dbReference>
<dbReference type="PANTHER" id="PTHR43055:SF1">
    <property type="entry name" value="FORMATE-DEPENDENT PHOSPHORIBOSYLGLYCINAMIDE FORMYLTRANSFERASE"/>
    <property type="match status" value="1"/>
</dbReference>
<dbReference type="Pfam" id="PF02222">
    <property type="entry name" value="ATP-grasp"/>
    <property type="match status" value="1"/>
</dbReference>
<dbReference type="Pfam" id="PF21244">
    <property type="entry name" value="PurT_C"/>
    <property type="match status" value="1"/>
</dbReference>
<dbReference type="Pfam" id="PF22660">
    <property type="entry name" value="RS_preATP-grasp-like"/>
    <property type="match status" value="1"/>
</dbReference>
<dbReference type="SUPFAM" id="SSF56059">
    <property type="entry name" value="Glutathione synthetase ATP-binding domain-like"/>
    <property type="match status" value="1"/>
</dbReference>
<dbReference type="SUPFAM" id="SSF52440">
    <property type="entry name" value="PreATP-grasp domain"/>
    <property type="match status" value="1"/>
</dbReference>
<dbReference type="SUPFAM" id="SSF51246">
    <property type="entry name" value="Rudiment single hybrid motif"/>
    <property type="match status" value="1"/>
</dbReference>
<dbReference type="PROSITE" id="PS50975">
    <property type="entry name" value="ATP_GRASP"/>
    <property type="match status" value="1"/>
</dbReference>
<accession>Q47A50</accession>
<comment type="function">
    <text evidence="1">Involved in the de novo purine biosynthesis. Catalyzes the transfer of formate to 5-phospho-ribosyl-glycinamide (GAR), producing 5-phospho-ribosyl-N-formylglycinamide (FGAR). Formate is provided by PurU via hydrolysis of 10-formyl-tetrahydrofolate.</text>
</comment>
<comment type="catalytic activity">
    <reaction evidence="1">
        <text>N(1)-(5-phospho-beta-D-ribosyl)glycinamide + formate + ATP = N(2)-formyl-N(1)-(5-phospho-beta-D-ribosyl)glycinamide + ADP + phosphate + H(+)</text>
        <dbReference type="Rhea" id="RHEA:24829"/>
        <dbReference type="ChEBI" id="CHEBI:15378"/>
        <dbReference type="ChEBI" id="CHEBI:15740"/>
        <dbReference type="ChEBI" id="CHEBI:30616"/>
        <dbReference type="ChEBI" id="CHEBI:43474"/>
        <dbReference type="ChEBI" id="CHEBI:143788"/>
        <dbReference type="ChEBI" id="CHEBI:147286"/>
        <dbReference type="ChEBI" id="CHEBI:456216"/>
        <dbReference type="EC" id="6.3.1.21"/>
    </reaction>
    <physiologicalReaction direction="left-to-right" evidence="1">
        <dbReference type="Rhea" id="RHEA:24830"/>
    </physiologicalReaction>
</comment>
<comment type="pathway">
    <text evidence="1">Purine metabolism; IMP biosynthesis via de novo pathway; N(2)-formyl-N(1)-(5-phospho-D-ribosyl)glycinamide from N(1)-(5-phospho-D-ribosyl)glycinamide (formate route): step 1/1.</text>
</comment>
<comment type="subunit">
    <text evidence="1">Homodimer.</text>
</comment>
<comment type="similarity">
    <text evidence="1">Belongs to the PurK/PurT family.</text>
</comment>
<protein>
    <recommendedName>
        <fullName evidence="1">Formate-dependent phosphoribosylglycinamide formyltransferase</fullName>
        <ecNumber evidence="1">6.3.1.21</ecNumber>
    </recommendedName>
    <alternativeName>
        <fullName evidence="1">5'-phosphoribosylglycinamide transformylase 2</fullName>
    </alternativeName>
    <alternativeName>
        <fullName evidence="1">Formate-dependent GAR transformylase</fullName>
    </alternativeName>
    <alternativeName>
        <fullName evidence="1">GAR transformylase 2</fullName>
        <shortName evidence="1">GART 2</shortName>
    </alternativeName>
    <alternativeName>
        <fullName evidence="1">Non-folate glycinamide ribonucleotide transformylase</fullName>
    </alternativeName>
    <alternativeName>
        <fullName evidence="1">Phosphoribosylglycinamide formyltransferase 2</fullName>
    </alternativeName>
</protein>
<feature type="chain" id="PRO_0000319155" description="Formate-dependent phosphoribosylglycinamide formyltransferase">
    <location>
        <begin position="1"/>
        <end position="399"/>
    </location>
</feature>
<feature type="domain" description="ATP-grasp" evidence="1">
    <location>
        <begin position="119"/>
        <end position="314"/>
    </location>
</feature>
<feature type="region of interest" description="Disordered" evidence="2">
    <location>
        <begin position="370"/>
        <end position="399"/>
    </location>
</feature>
<feature type="binding site" evidence="1">
    <location>
        <begin position="21"/>
        <end position="22"/>
    </location>
    <ligand>
        <name>N(1)-(5-phospho-beta-D-ribosyl)glycinamide</name>
        <dbReference type="ChEBI" id="CHEBI:143788"/>
    </ligand>
</feature>
<feature type="binding site" evidence="1">
    <location>
        <position position="81"/>
    </location>
    <ligand>
        <name>N(1)-(5-phospho-beta-D-ribosyl)glycinamide</name>
        <dbReference type="ChEBI" id="CHEBI:143788"/>
    </ligand>
</feature>
<feature type="binding site" evidence="1">
    <location>
        <position position="114"/>
    </location>
    <ligand>
        <name>ATP</name>
        <dbReference type="ChEBI" id="CHEBI:30616"/>
    </ligand>
</feature>
<feature type="binding site" evidence="1">
    <location>
        <position position="156"/>
    </location>
    <ligand>
        <name>ATP</name>
        <dbReference type="ChEBI" id="CHEBI:30616"/>
    </ligand>
</feature>
<feature type="binding site" evidence="1">
    <location>
        <begin position="161"/>
        <end position="166"/>
    </location>
    <ligand>
        <name>ATP</name>
        <dbReference type="ChEBI" id="CHEBI:30616"/>
    </ligand>
</feature>
<feature type="binding site" evidence="1">
    <location>
        <begin position="196"/>
        <end position="199"/>
    </location>
    <ligand>
        <name>ATP</name>
        <dbReference type="ChEBI" id="CHEBI:30616"/>
    </ligand>
</feature>
<feature type="binding site" evidence="1">
    <location>
        <position position="204"/>
    </location>
    <ligand>
        <name>ATP</name>
        <dbReference type="ChEBI" id="CHEBI:30616"/>
    </ligand>
</feature>
<feature type="binding site" evidence="1">
    <location>
        <position position="273"/>
    </location>
    <ligand>
        <name>Mg(2+)</name>
        <dbReference type="ChEBI" id="CHEBI:18420"/>
    </ligand>
</feature>
<feature type="binding site" evidence="1">
    <location>
        <position position="285"/>
    </location>
    <ligand>
        <name>Mg(2+)</name>
        <dbReference type="ChEBI" id="CHEBI:18420"/>
    </ligand>
</feature>
<feature type="binding site" evidence="1">
    <location>
        <position position="292"/>
    </location>
    <ligand>
        <name>N(1)-(5-phospho-beta-D-ribosyl)glycinamide</name>
        <dbReference type="ChEBI" id="CHEBI:143788"/>
    </ligand>
</feature>
<feature type="binding site" evidence="1">
    <location>
        <position position="361"/>
    </location>
    <ligand>
        <name>N(1)-(5-phospho-beta-D-ribosyl)glycinamide</name>
        <dbReference type="ChEBI" id="CHEBI:143788"/>
    </ligand>
</feature>
<feature type="binding site" evidence="1">
    <location>
        <begin position="368"/>
        <end position="369"/>
    </location>
    <ligand>
        <name>N(1)-(5-phospho-beta-D-ribosyl)glycinamide</name>
        <dbReference type="ChEBI" id="CHEBI:143788"/>
    </ligand>
</feature>
<proteinExistence type="inferred from homology"/>
<sequence length="399" mass="42754">MKIGTPLSPSALRVMLLGAGELGKEVIIALQRLGVEVIAVDRYENAPGHQVAHRAHVISMTDGAALRQLVEQEKPHLIVPEIEAIATDMLVEIEAAGLAEVIPTARAAKLTMNREGIRRLAAEELGLPTSPYKFADSLAELQAAIDGGIGYPCIVKPTMSSSGKGQSLLRGPDDVQKAWDYAASGGRVNQGRVIVEGFIDFDYEITLLTVRARDTAGEVVTHFCEPIGHVQVGGDYVESWQPQAMSPAALQRAQEIAAAVTGNLGGRGLFGVELFVKGDMVWFSEVSPRPHDTGLVTLCSQRFSEFELHARAILGLPVDTALREAGASAVIYGGMEEKGIAFAGLEEALAVPRSDLRLFGKPESFKKRRMGVAVANGESTDQARERAKLAASKVRPTRT</sequence>